<gene>
    <name type="ordered locus">Sbal223_1087</name>
</gene>
<protein>
    <recommendedName>
        <fullName evidence="1">UPF0250 protein Sbal223_1087</fullName>
    </recommendedName>
</protein>
<proteinExistence type="inferred from homology"/>
<accession>B8E4W6</accession>
<feature type="chain" id="PRO_1000200440" description="UPF0250 protein Sbal223_1087">
    <location>
        <begin position="1"/>
        <end position="88"/>
    </location>
</feature>
<name>Y1087_SHEB2</name>
<comment type="similarity">
    <text evidence="1">Belongs to the UPF0250 family.</text>
</comment>
<organism>
    <name type="scientific">Shewanella baltica (strain OS223)</name>
    <dbReference type="NCBI Taxonomy" id="407976"/>
    <lineage>
        <taxon>Bacteria</taxon>
        <taxon>Pseudomonadati</taxon>
        <taxon>Pseudomonadota</taxon>
        <taxon>Gammaproteobacteria</taxon>
        <taxon>Alteromonadales</taxon>
        <taxon>Shewanellaceae</taxon>
        <taxon>Shewanella</taxon>
    </lineage>
</organism>
<dbReference type="EMBL" id="CP001252">
    <property type="protein sequence ID" value="ACK45602.1"/>
    <property type="molecule type" value="Genomic_DNA"/>
</dbReference>
<dbReference type="SMR" id="B8E4W6"/>
<dbReference type="KEGG" id="sbp:Sbal223_1087"/>
<dbReference type="HOGENOM" id="CLU_161438_2_1_6"/>
<dbReference type="Proteomes" id="UP000002507">
    <property type="component" value="Chromosome"/>
</dbReference>
<dbReference type="GO" id="GO:0005829">
    <property type="term" value="C:cytosol"/>
    <property type="evidence" value="ECO:0007669"/>
    <property type="project" value="TreeGrafter"/>
</dbReference>
<dbReference type="Gene3D" id="3.30.70.260">
    <property type="match status" value="1"/>
</dbReference>
<dbReference type="HAMAP" id="MF_00659">
    <property type="entry name" value="UPF0250"/>
    <property type="match status" value="1"/>
</dbReference>
<dbReference type="InterPro" id="IPR007454">
    <property type="entry name" value="UPF0250_YbeD-like"/>
</dbReference>
<dbReference type="InterPro" id="IPR027471">
    <property type="entry name" value="YbeD-like_sf"/>
</dbReference>
<dbReference type="NCBIfam" id="NF003447">
    <property type="entry name" value="PRK04998.1"/>
    <property type="match status" value="1"/>
</dbReference>
<dbReference type="PANTHER" id="PTHR38036">
    <property type="entry name" value="UPF0250 PROTEIN YBED"/>
    <property type="match status" value="1"/>
</dbReference>
<dbReference type="PANTHER" id="PTHR38036:SF1">
    <property type="entry name" value="UPF0250 PROTEIN YBED"/>
    <property type="match status" value="1"/>
</dbReference>
<dbReference type="Pfam" id="PF04359">
    <property type="entry name" value="DUF493"/>
    <property type="match status" value="1"/>
</dbReference>
<dbReference type="SUPFAM" id="SSF117991">
    <property type="entry name" value="YbeD/HP0495-like"/>
    <property type="match status" value="1"/>
</dbReference>
<sequence length="88" mass="9768">MLDTKFDELMDFPCAFPFKVVGEAHETLTDKVVAVVQKHAPGDYSPSTKTSSKGSYHSITIRVTVTSKDHIEILYTELAAIEGVRRVL</sequence>
<evidence type="ECO:0000255" key="1">
    <source>
        <dbReference type="HAMAP-Rule" id="MF_00659"/>
    </source>
</evidence>
<reference key="1">
    <citation type="submission" date="2008-12" db="EMBL/GenBank/DDBJ databases">
        <title>Complete sequence of chromosome of Shewanella baltica OS223.</title>
        <authorList>
            <consortium name="US DOE Joint Genome Institute"/>
            <person name="Lucas S."/>
            <person name="Copeland A."/>
            <person name="Lapidus A."/>
            <person name="Glavina del Rio T."/>
            <person name="Dalin E."/>
            <person name="Tice H."/>
            <person name="Bruce D."/>
            <person name="Goodwin L."/>
            <person name="Pitluck S."/>
            <person name="Chertkov O."/>
            <person name="Meincke L."/>
            <person name="Brettin T."/>
            <person name="Detter J.C."/>
            <person name="Han C."/>
            <person name="Kuske C.R."/>
            <person name="Larimer F."/>
            <person name="Land M."/>
            <person name="Hauser L."/>
            <person name="Kyrpides N."/>
            <person name="Ovchinnikova G."/>
            <person name="Brettar I."/>
            <person name="Rodrigues J."/>
            <person name="Konstantinidis K."/>
            <person name="Tiedje J."/>
        </authorList>
    </citation>
    <scope>NUCLEOTIDE SEQUENCE [LARGE SCALE GENOMIC DNA]</scope>
    <source>
        <strain>OS223</strain>
    </source>
</reference>